<keyword id="KW-0489">Methyltransferase</keyword>
<keyword id="KW-1185">Reference proteome</keyword>
<keyword id="KW-0949">S-adenosyl-L-methionine</keyword>
<keyword id="KW-0808">Transferase</keyword>
<gene>
    <name evidence="1" type="primary">dphB</name>
    <name type="ordered locus">Msp_1017</name>
</gene>
<proteinExistence type="inferred from homology"/>
<feature type="chain" id="PRO_1000064824" description="Diphthine synthase">
    <location>
        <begin position="1"/>
        <end position="263"/>
    </location>
</feature>
<feature type="binding site" evidence="1">
    <location>
        <position position="9"/>
    </location>
    <ligand>
        <name>S-adenosyl-L-methionine</name>
        <dbReference type="ChEBI" id="CHEBI:59789"/>
    </ligand>
</feature>
<feature type="binding site" evidence="1">
    <location>
        <position position="84"/>
    </location>
    <ligand>
        <name>S-adenosyl-L-methionine</name>
        <dbReference type="ChEBI" id="CHEBI:59789"/>
    </ligand>
</feature>
<feature type="binding site" evidence="1">
    <location>
        <position position="87"/>
    </location>
    <ligand>
        <name>S-adenosyl-L-methionine</name>
        <dbReference type="ChEBI" id="CHEBI:59789"/>
    </ligand>
</feature>
<feature type="binding site" evidence="1">
    <location>
        <begin position="112"/>
        <end position="113"/>
    </location>
    <ligand>
        <name>S-adenosyl-L-methionine</name>
        <dbReference type="ChEBI" id="CHEBI:59789"/>
    </ligand>
</feature>
<feature type="binding site" evidence="1">
    <location>
        <position position="164"/>
    </location>
    <ligand>
        <name>S-adenosyl-L-methionine</name>
        <dbReference type="ChEBI" id="CHEBI:59789"/>
    </ligand>
</feature>
<feature type="binding site" evidence="1">
    <location>
        <position position="207"/>
    </location>
    <ligand>
        <name>S-adenosyl-L-methionine</name>
        <dbReference type="ChEBI" id="CHEBI:59789"/>
    </ligand>
</feature>
<feature type="binding site" evidence="1">
    <location>
        <position position="232"/>
    </location>
    <ligand>
        <name>S-adenosyl-L-methionine</name>
        <dbReference type="ChEBI" id="CHEBI:59789"/>
    </ligand>
</feature>
<evidence type="ECO:0000255" key="1">
    <source>
        <dbReference type="HAMAP-Rule" id="MF_01084"/>
    </source>
</evidence>
<organism>
    <name type="scientific">Methanosphaera stadtmanae (strain ATCC 43021 / DSM 3091 / JCM 11832 / MCB-3)</name>
    <dbReference type="NCBI Taxonomy" id="339860"/>
    <lineage>
        <taxon>Archaea</taxon>
        <taxon>Methanobacteriati</taxon>
        <taxon>Methanobacteriota</taxon>
        <taxon>Methanomada group</taxon>
        <taxon>Methanobacteria</taxon>
        <taxon>Methanobacteriales</taxon>
        <taxon>Methanobacteriaceae</taxon>
        <taxon>Methanosphaera</taxon>
    </lineage>
</organism>
<reference key="1">
    <citation type="journal article" date="2006" name="J. Bacteriol.">
        <title>The genome sequence of Methanosphaera stadtmanae reveals why this human intestinal archaeon is restricted to methanol and H2 for methane formation and ATP synthesis.</title>
        <authorList>
            <person name="Fricke W.F."/>
            <person name="Seedorf H."/>
            <person name="Henne A."/>
            <person name="Kruer M."/>
            <person name="Liesegang H."/>
            <person name="Hedderich R."/>
            <person name="Gottschalk G."/>
            <person name="Thauer R.K."/>
        </authorList>
    </citation>
    <scope>NUCLEOTIDE SEQUENCE [LARGE SCALE GENOMIC DNA]</scope>
    <source>
        <strain>ATCC 43021 / DSM 3091 / JCM 11832 / MCB-3</strain>
    </source>
</reference>
<accession>Q2NFJ8</accession>
<dbReference type="EC" id="2.1.1.98" evidence="1"/>
<dbReference type="EMBL" id="CP000102">
    <property type="protein sequence ID" value="ABC57405.1"/>
    <property type="molecule type" value="Genomic_DNA"/>
</dbReference>
<dbReference type="SMR" id="Q2NFJ8"/>
<dbReference type="STRING" id="339860.Msp_1017"/>
<dbReference type="KEGG" id="mst:Msp_1017"/>
<dbReference type="eggNOG" id="arCOG04161">
    <property type="taxonomic scope" value="Archaea"/>
</dbReference>
<dbReference type="HOGENOM" id="CLU_066040_0_0_2"/>
<dbReference type="OrthoDB" id="39139at2157"/>
<dbReference type="UniPathway" id="UPA00559"/>
<dbReference type="Proteomes" id="UP000001931">
    <property type="component" value="Chromosome"/>
</dbReference>
<dbReference type="GO" id="GO:0004164">
    <property type="term" value="F:diphthine synthase activity"/>
    <property type="evidence" value="ECO:0007669"/>
    <property type="project" value="UniProtKB-UniRule"/>
</dbReference>
<dbReference type="GO" id="GO:0032259">
    <property type="term" value="P:methylation"/>
    <property type="evidence" value="ECO:0007669"/>
    <property type="project" value="UniProtKB-KW"/>
</dbReference>
<dbReference type="GO" id="GO:0017183">
    <property type="term" value="P:protein histidyl modification to diphthamide"/>
    <property type="evidence" value="ECO:0007669"/>
    <property type="project" value="UniProtKB-UniRule"/>
</dbReference>
<dbReference type="CDD" id="cd11647">
    <property type="entry name" value="DHP5_DphB"/>
    <property type="match status" value="1"/>
</dbReference>
<dbReference type="Gene3D" id="3.40.1010.10">
    <property type="entry name" value="Cobalt-precorrin-4 Transmethylase, Domain 1"/>
    <property type="match status" value="1"/>
</dbReference>
<dbReference type="Gene3D" id="3.30.950.10">
    <property type="entry name" value="Methyltransferase, Cobalt-precorrin-4 Transmethylase, Domain 2"/>
    <property type="match status" value="1"/>
</dbReference>
<dbReference type="HAMAP" id="MF_01084">
    <property type="entry name" value="Diphthine_synth"/>
    <property type="match status" value="1"/>
</dbReference>
<dbReference type="InterPro" id="IPR000878">
    <property type="entry name" value="4pyrrol_Mease"/>
</dbReference>
<dbReference type="InterPro" id="IPR035996">
    <property type="entry name" value="4pyrrol_Methylase_sf"/>
</dbReference>
<dbReference type="InterPro" id="IPR014777">
    <property type="entry name" value="4pyrrole_Mease_sub1"/>
</dbReference>
<dbReference type="InterPro" id="IPR014776">
    <property type="entry name" value="4pyrrole_Mease_sub2"/>
</dbReference>
<dbReference type="InterPro" id="IPR004551">
    <property type="entry name" value="Dphthn_synthase"/>
</dbReference>
<dbReference type="NCBIfam" id="TIGR00522">
    <property type="entry name" value="dph5"/>
    <property type="match status" value="1"/>
</dbReference>
<dbReference type="PANTHER" id="PTHR10882:SF0">
    <property type="entry name" value="DIPHTHINE METHYL ESTER SYNTHASE"/>
    <property type="match status" value="1"/>
</dbReference>
<dbReference type="PANTHER" id="PTHR10882">
    <property type="entry name" value="DIPHTHINE SYNTHASE"/>
    <property type="match status" value="1"/>
</dbReference>
<dbReference type="Pfam" id="PF00590">
    <property type="entry name" value="TP_methylase"/>
    <property type="match status" value="1"/>
</dbReference>
<dbReference type="PIRSF" id="PIRSF036432">
    <property type="entry name" value="Diphthine_synth"/>
    <property type="match status" value="1"/>
</dbReference>
<dbReference type="SUPFAM" id="SSF53790">
    <property type="entry name" value="Tetrapyrrole methylase"/>
    <property type="match status" value="1"/>
</dbReference>
<sequence>MLYFIGLGLFSEDDISYKGFKALKSVDCIYAEFYTAKLMGGNIDNLIEKLDVPFITLKREDVEDANVIIKEAMTKDIAFVTAGDSLMATTHTELYVEAINKGIKTQIIHGSSIFSAAPGISGLQAYKFGKTTTVPFPDENFFPHSPYDAIKLNSQMGLHTLVLLDIQAHKDRYMTVNQALDYLSKVESERKEHVFDDDRIVIGIAQAGSKHPIVKGGRVSDVKNFDFGKPLHCIIVPANLHFIEAEALITLADVDKELLKDFL</sequence>
<name>DPHB_METST</name>
<comment type="function">
    <text evidence="1">S-adenosyl-L-methionine-dependent methyltransferase that catalyzes the trimethylation of the amino group of the modified target histidine residue in translation elongation factor 2 (EF-2), to form an intermediate called diphthine. The three successive methylation reactions represent the second step of diphthamide biosynthesis.</text>
</comment>
<comment type="catalytic activity">
    <reaction evidence="1">
        <text>2-[(3S)-amino-3-carboxypropyl]-L-histidyl-[translation elongation factor 2] + 3 S-adenosyl-L-methionine = diphthine-[translation elongation factor 2] + 3 S-adenosyl-L-homocysteine + 3 H(+)</text>
        <dbReference type="Rhea" id="RHEA:36415"/>
        <dbReference type="Rhea" id="RHEA-COMP:9749"/>
        <dbReference type="Rhea" id="RHEA-COMP:10172"/>
        <dbReference type="ChEBI" id="CHEBI:15378"/>
        <dbReference type="ChEBI" id="CHEBI:57856"/>
        <dbReference type="ChEBI" id="CHEBI:59789"/>
        <dbReference type="ChEBI" id="CHEBI:73995"/>
        <dbReference type="ChEBI" id="CHEBI:82696"/>
        <dbReference type="EC" id="2.1.1.98"/>
    </reaction>
</comment>
<comment type="pathway">
    <text evidence="1">Protein modification; peptidyl-diphthamide biosynthesis.</text>
</comment>
<comment type="subunit">
    <text evidence="1">Homodimer.</text>
</comment>
<comment type="similarity">
    <text evidence="1">Belongs to the diphthine synthase family.</text>
</comment>
<protein>
    <recommendedName>
        <fullName evidence="1">Diphthine synthase</fullName>
        <ecNumber evidence="1">2.1.1.98</ecNumber>
    </recommendedName>
    <alternativeName>
        <fullName evidence="1">Diphthamide biosynthesis methyltransferase</fullName>
    </alternativeName>
</protein>